<keyword id="KW-0687">Ribonucleoprotein</keyword>
<keyword id="KW-0689">Ribosomal protein</keyword>
<keyword id="KW-0694">RNA-binding</keyword>
<keyword id="KW-0699">rRNA-binding</keyword>
<comment type="function">
    <text evidence="1">One of the primary rRNA binding proteins, it binds specifically to the 5'-end of 16S ribosomal RNA.</text>
</comment>
<comment type="subunit">
    <text evidence="1">Part of the 30S ribosomal subunit.</text>
</comment>
<comment type="similarity">
    <text evidence="1">Belongs to the universal ribosomal protein uS17 family.</text>
</comment>
<reference key="1">
    <citation type="submission" date="2006-11" db="EMBL/GenBank/DDBJ databases">
        <title>Identification and characterization of a new conjugation/ type IVA secretion system (trb/tra) of L. pneumophila Corby localized on a mobile genomic island.</title>
        <authorList>
            <person name="Gloeckner G."/>
            <person name="Albert-Weissenberger C."/>
            <person name="Weinmann E."/>
            <person name="Jacobi S."/>
            <person name="Schunder E."/>
            <person name="Steinert M."/>
            <person name="Buchrieser C."/>
            <person name="Hacker J."/>
            <person name="Heuner K."/>
        </authorList>
    </citation>
    <scope>NUCLEOTIDE SEQUENCE [LARGE SCALE GENOMIC DNA]</scope>
    <source>
        <strain>Corby</strain>
    </source>
</reference>
<feature type="chain" id="PRO_1000054972" description="Small ribosomal subunit protein uS17">
    <location>
        <begin position="1"/>
        <end position="84"/>
    </location>
</feature>
<accession>A5IHQ5</accession>
<organism>
    <name type="scientific">Legionella pneumophila (strain Corby)</name>
    <dbReference type="NCBI Taxonomy" id="400673"/>
    <lineage>
        <taxon>Bacteria</taxon>
        <taxon>Pseudomonadati</taxon>
        <taxon>Pseudomonadota</taxon>
        <taxon>Gammaproteobacteria</taxon>
        <taxon>Legionellales</taxon>
        <taxon>Legionellaceae</taxon>
        <taxon>Legionella</taxon>
    </lineage>
</organism>
<name>RS17_LEGPC</name>
<dbReference type="EMBL" id="CP000675">
    <property type="protein sequence ID" value="ABQ56905.1"/>
    <property type="molecule type" value="Genomic_DNA"/>
</dbReference>
<dbReference type="RefSeq" id="WP_010946087.1">
    <property type="nucleotide sequence ID" value="NZ_JAPMSS010000006.1"/>
</dbReference>
<dbReference type="SMR" id="A5IHQ5"/>
<dbReference type="GeneID" id="57034341"/>
<dbReference type="KEGG" id="lpc:LPC_3004"/>
<dbReference type="HOGENOM" id="CLU_073626_1_1_6"/>
<dbReference type="GO" id="GO:0022627">
    <property type="term" value="C:cytosolic small ribosomal subunit"/>
    <property type="evidence" value="ECO:0007669"/>
    <property type="project" value="TreeGrafter"/>
</dbReference>
<dbReference type="GO" id="GO:0019843">
    <property type="term" value="F:rRNA binding"/>
    <property type="evidence" value="ECO:0007669"/>
    <property type="project" value="UniProtKB-UniRule"/>
</dbReference>
<dbReference type="GO" id="GO:0003735">
    <property type="term" value="F:structural constituent of ribosome"/>
    <property type="evidence" value="ECO:0007669"/>
    <property type="project" value="InterPro"/>
</dbReference>
<dbReference type="GO" id="GO:0006412">
    <property type="term" value="P:translation"/>
    <property type="evidence" value="ECO:0007669"/>
    <property type="project" value="UniProtKB-UniRule"/>
</dbReference>
<dbReference type="CDD" id="cd00364">
    <property type="entry name" value="Ribosomal_uS17"/>
    <property type="match status" value="1"/>
</dbReference>
<dbReference type="Gene3D" id="2.40.50.140">
    <property type="entry name" value="Nucleic acid-binding proteins"/>
    <property type="match status" value="1"/>
</dbReference>
<dbReference type="HAMAP" id="MF_01345_B">
    <property type="entry name" value="Ribosomal_uS17_B"/>
    <property type="match status" value="1"/>
</dbReference>
<dbReference type="InterPro" id="IPR012340">
    <property type="entry name" value="NA-bd_OB-fold"/>
</dbReference>
<dbReference type="InterPro" id="IPR000266">
    <property type="entry name" value="Ribosomal_uS17"/>
</dbReference>
<dbReference type="InterPro" id="IPR019984">
    <property type="entry name" value="Ribosomal_uS17_bact/chlr"/>
</dbReference>
<dbReference type="NCBIfam" id="NF004123">
    <property type="entry name" value="PRK05610.1"/>
    <property type="match status" value="1"/>
</dbReference>
<dbReference type="NCBIfam" id="TIGR03635">
    <property type="entry name" value="uS17_bact"/>
    <property type="match status" value="1"/>
</dbReference>
<dbReference type="PANTHER" id="PTHR10744">
    <property type="entry name" value="40S RIBOSOMAL PROTEIN S11 FAMILY MEMBER"/>
    <property type="match status" value="1"/>
</dbReference>
<dbReference type="PANTHER" id="PTHR10744:SF1">
    <property type="entry name" value="SMALL RIBOSOMAL SUBUNIT PROTEIN US17M"/>
    <property type="match status" value="1"/>
</dbReference>
<dbReference type="Pfam" id="PF00366">
    <property type="entry name" value="Ribosomal_S17"/>
    <property type="match status" value="1"/>
</dbReference>
<dbReference type="PRINTS" id="PR00973">
    <property type="entry name" value="RIBOSOMALS17"/>
</dbReference>
<dbReference type="SUPFAM" id="SSF50249">
    <property type="entry name" value="Nucleic acid-binding proteins"/>
    <property type="match status" value="1"/>
</dbReference>
<evidence type="ECO:0000255" key="1">
    <source>
        <dbReference type="HAMAP-Rule" id="MF_01345"/>
    </source>
</evidence>
<evidence type="ECO:0000305" key="2"/>
<gene>
    <name evidence="1" type="primary">rpsQ</name>
    <name type="ordered locus">LPC_3004</name>
</gene>
<proteinExistence type="inferred from homology"/>
<sequence length="84" mass="9637">MSTNSESNARTMIGKVVSDKMDKTIVVMIERTVKHPKYGKIMKRRTKLHAHDENQVCRVGNTVKIRESRPLSKTKSWVLVEVIS</sequence>
<protein>
    <recommendedName>
        <fullName evidence="1">Small ribosomal subunit protein uS17</fullName>
    </recommendedName>
    <alternativeName>
        <fullName evidence="2">30S ribosomal protein S17</fullName>
    </alternativeName>
</protein>